<gene>
    <name evidence="1" type="primary">glyA2</name>
    <name type="ordered locus">BQ2027_MB0071C</name>
</gene>
<dbReference type="EC" id="2.1.2.1" evidence="1"/>
<dbReference type="EMBL" id="LT708304">
    <property type="protein sequence ID" value="SIT98450.1"/>
    <property type="molecule type" value="Genomic_DNA"/>
</dbReference>
<dbReference type="RefSeq" id="NP_853740.1">
    <property type="nucleotide sequence ID" value="NC_002945.3"/>
</dbReference>
<dbReference type="SMR" id="Q7U2X3"/>
<dbReference type="KEGG" id="mbo:BQ2027_MB0071C"/>
<dbReference type="PATRIC" id="fig|233413.5.peg.80"/>
<dbReference type="UniPathway" id="UPA00193"/>
<dbReference type="UniPathway" id="UPA00288">
    <property type="reaction ID" value="UER01023"/>
</dbReference>
<dbReference type="Proteomes" id="UP000001419">
    <property type="component" value="Chromosome"/>
</dbReference>
<dbReference type="GO" id="GO:0005829">
    <property type="term" value="C:cytosol"/>
    <property type="evidence" value="ECO:0007669"/>
    <property type="project" value="TreeGrafter"/>
</dbReference>
<dbReference type="GO" id="GO:0004372">
    <property type="term" value="F:glycine hydroxymethyltransferase activity"/>
    <property type="evidence" value="ECO:0007669"/>
    <property type="project" value="UniProtKB-UniRule"/>
</dbReference>
<dbReference type="GO" id="GO:0030170">
    <property type="term" value="F:pyridoxal phosphate binding"/>
    <property type="evidence" value="ECO:0007669"/>
    <property type="project" value="UniProtKB-UniRule"/>
</dbReference>
<dbReference type="GO" id="GO:0019264">
    <property type="term" value="P:glycine biosynthetic process from serine"/>
    <property type="evidence" value="ECO:0007669"/>
    <property type="project" value="UniProtKB-UniRule"/>
</dbReference>
<dbReference type="GO" id="GO:0035999">
    <property type="term" value="P:tetrahydrofolate interconversion"/>
    <property type="evidence" value="ECO:0007669"/>
    <property type="project" value="UniProtKB-UniRule"/>
</dbReference>
<dbReference type="CDD" id="cd00378">
    <property type="entry name" value="SHMT"/>
    <property type="match status" value="1"/>
</dbReference>
<dbReference type="FunFam" id="3.40.640.10:FF:000001">
    <property type="entry name" value="Serine hydroxymethyltransferase"/>
    <property type="match status" value="1"/>
</dbReference>
<dbReference type="Gene3D" id="3.90.1150.10">
    <property type="entry name" value="Aspartate Aminotransferase, domain 1"/>
    <property type="match status" value="1"/>
</dbReference>
<dbReference type="Gene3D" id="3.40.640.10">
    <property type="entry name" value="Type I PLP-dependent aspartate aminotransferase-like (Major domain)"/>
    <property type="match status" value="1"/>
</dbReference>
<dbReference type="HAMAP" id="MF_00051">
    <property type="entry name" value="SHMT"/>
    <property type="match status" value="1"/>
</dbReference>
<dbReference type="InterPro" id="IPR015424">
    <property type="entry name" value="PyrdxlP-dep_Trfase"/>
</dbReference>
<dbReference type="InterPro" id="IPR015421">
    <property type="entry name" value="PyrdxlP-dep_Trfase_major"/>
</dbReference>
<dbReference type="InterPro" id="IPR015422">
    <property type="entry name" value="PyrdxlP-dep_Trfase_small"/>
</dbReference>
<dbReference type="InterPro" id="IPR001085">
    <property type="entry name" value="Ser_HO-MeTrfase"/>
</dbReference>
<dbReference type="InterPro" id="IPR049943">
    <property type="entry name" value="Ser_HO-MeTrfase-like"/>
</dbReference>
<dbReference type="InterPro" id="IPR019798">
    <property type="entry name" value="Ser_HO-MeTrfase_PLP_BS"/>
</dbReference>
<dbReference type="InterPro" id="IPR039429">
    <property type="entry name" value="SHMT-like_dom"/>
</dbReference>
<dbReference type="NCBIfam" id="NF000586">
    <property type="entry name" value="PRK00011.1"/>
    <property type="match status" value="1"/>
</dbReference>
<dbReference type="PANTHER" id="PTHR11680">
    <property type="entry name" value="SERINE HYDROXYMETHYLTRANSFERASE"/>
    <property type="match status" value="1"/>
</dbReference>
<dbReference type="PANTHER" id="PTHR11680:SF35">
    <property type="entry name" value="SERINE HYDROXYMETHYLTRANSFERASE 1"/>
    <property type="match status" value="1"/>
</dbReference>
<dbReference type="Pfam" id="PF00464">
    <property type="entry name" value="SHMT"/>
    <property type="match status" value="1"/>
</dbReference>
<dbReference type="PIRSF" id="PIRSF000412">
    <property type="entry name" value="SHMT"/>
    <property type="match status" value="1"/>
</dbReference>
<dbReference type="SUPFAM" id="SSF53383">
    <property type="entry name" value="PLP-dependent transferases"/>
    <property type="match status" value="1"/>
</dbReference>
<dbReference type="PROSITE" id="PS00096">
    <property type="entry name" value="SHMT"/>
    <property type="match status" value="1"/>
</dbReference>
<reference key="1">
    <citation type="journal article" date="2003" name="Proc. Natl. Acad. Sci. U.S.A.">
        <title>The complete genome sequence of Mycobacterium bovis.</title>
        <authorList>
            <person name="Garnier T."/>
            <person name="Eiglmeier K."/>
            <person name="Camus J.-C."/>
            <person name="Medina N."/>
            <person name="Mansoor H."/>
            <person name="Pryor M."/>
            <person name="Duthoy S."/>
            <person name="Grondin S."/>
            <person name="Lacroix C."/>
            <person name="Monsempe C."/>
            <person name="Simon S."/>
            <person name="Harris B."/>
            <person name="Atkin R."/>
            <person name="Doggett J."/>
            <person name="Mayes R."/>
            <person name="Keating L."/>
            <person name="Wheeler P.R."/>
            <person name="Parkhill J."/>
            <person name="Barrell B.G."/>
            <person name="Cole S.T."/>
            <person name="Gordon S.V."/>
            <person name="Hewinson R.G."/>
        </authorList>
    </citation>
    <scope>NUCLEOTIDE SEQUENCE [LARGE SCALE GENOMIC DNA]</scope>
    <source>
        <strain>ATCC BAA-935 / AF2122/97</strain>
    </source>
</reference>
<reference key="2">
    <citation type="journal article" date="2017" name="Genome Announc.">
        <title>Updated reference genome sequence and annotation of Mycobacterium bovis AF2122/97.</title>
        <authorList>
            <person name="Malone K.M."/>
            <person name="Farrell D."/>
            <person name="Stuber T.P."/>
            <person name="Schubert O.T."/>
            <person name="Aebersold R."/>
            <person name="Robbe-Austerman S."/>
            <person name="Gordon S.V."/>
        </authorList>
    </citation>
    <scope>NUCLEOTIDE SEQUENCE [LARGE SCALE GENOMIC DNA]</scope>
    <scope>GENOME REANNOTATION</scope>
    <source>
        <strain>ATCC BAA-935 / AF2122/97</strain>
    </source>
</reference>
<accession>Q7U2X3</accession>
<accession>A0A1R3XU84</accession>
<accession>X2BDX9</accession>
<organism>
    <name type="scientific">Mycobacterium bovis (strain ATCC BAA-935 / AF2122/97)</name>
    <dbReference type="NCBI Taxonomy" id="233413"/>
    <lineage>
        <taxon>Bacteria</taxon>
        <taxon>Bacillati</taxon>
        <taxon>Actinomycetota</taxon>
        <taxon>Actinomycetes</taxon>
        <taxon>Mycobacteriales</taxon>
        <taxon>Mycobacteriaceae</taxon>
        <taxon>Mycobacterium</taxon>
        <taxon>Mycobacterium tuberculosis complex</taxon>
    </lineage>
</organism>
<sequence length="425" mass="45454">MNTLNDSLTAFDPDIAALIDGELRRQESGLEMIASENYAPLAVMQAQGSVLTNKYAEGYPGRRYYGGCEFVDGVEQLAIDRVKALFGAEYANVQPHSGATANAATMHALLNPGDTILGLSLAHGGHLTHGMRINFSGKLYHATAYEVSKEDYLVDMDAVAEAARTHRPKMIIAGWSAYPRQLDFARFRAIADEVDAVLMVDMAHFAGLVAAGVHPSPVPHAHVVTSTTHKTLGGPRGGIILCNDPAIAKKINSAVFPGQQGGPLGHVIAAKATAFKMAAQPEFAQRQQRCLDGARILAGRLTQPDVAERGIAVLTGGTDVHLVLVDLRDAELDGQQAEDRLAAVDITVNRNAVPFDPRPPMITSGLRIGTPALAARGFSHNDFRAVADLIAAALTATNDDQLGPLRAQVQRLAARYPLYPELHRT</sequence>
<name>GLYA2_MYCBO</name>
<evidence type="ECO:0000255" key="1">
    <source>
        <dbReference type="HAMAP-Rule" id="MF_00051"/>
    </source>
</evidence>
<proteinExistence type="inferred from homology"/>
<protein>
    <recommendedName>
        <fullName evidence="1">Serine hydroxymethyltransferase 2</fullName>
        <shortName evidence="1">SHMT 2</shortName>
        <shortName evidence="1">Serine methylase 2</shortName>
        <ecNumber evidence="1">2.1.2.1</ecNumber>
    </recommendedName>
</protein>
<feature type="chain" id="PRO_0000113607" description="Serine hydroxymethyltransferase 2">
    <location>
        <begin position="1"/>
        <end position="425"/>
    </location>
</feature>
<feature type="binding site" evidence="1">
    <location>
        <position position="121"/>
    </location>
    <ligand>
        <name>(6S)-5,6,7,8-tetrahydrofolate</name>
        <dbReference type="ChEBI" id="CHEBI:57453"/>
    </ligand>
</feature>
<feature type="binding site" evidence="1">
    <location>
        <begin position="125"/>
        <end position="127"/>
    </location>
    <ligand>
        <name>(6S)-5,6,7,8-tetrahydrofolate</name>
        <dbReference type="ChEBI" id="CHEBI:57453"/>
    </ligand>
</feature>
<feature type="site" description="Plays an important role in substrate specificity" evidence="1">
    <location>
        <position position="229"/>
    </location>
</feature>
<feature type="modified residue" description="N6-(pyridoxal phosphate)lysine" evidence="1">
    <location>
        <position position="230"/>
    </location>
</feature>
<keyword id="KW-0028">Amino-acid biosynthesis</keyword>
<keyword id="KW-0963">Cytoplasm</keyword>
<keyword id="KW-0554">One-carbon metabolism</keyword>
<keyword id="KW-0663">Pyridoxal phosphate</keyword>
<keyword id="KW-1185">Reference proteome</keyword>
<keyword id="KW-0808">Transferase</keyword>
<comment type="function">
    <text evidence="1">Catalyzes the reversible interconversion of serine and glycine with tetrahydrofolate (THF) serving as the one-carbon carrier. This reaction serves as the major source of one-carbon groups required for the biosynthesis of purines, thymidylate, methionine, and other important biomolecules. Also exhibits THF-independent aldolase activity toward beta-hydroxyamino acids, producing glycine and aldehydes, via a retro-aldol mechanism.</text>
</comment>
<comment type="catalytic activity">
    <reaction evidence="1">
        <text>(6R)-5,10-methylene-5,6,7,8-tetrahydrofolate + glycine + H2O = (6S)-5,6,7,8-tetrahydrofolate + L-serine</text>
        <dbReference type="Rhea" id="RHEA:15481"/>
        <dbReference type="ChEBI" id="CHEBI:15377"/>
        <dbReference type="ChEBI" id="CHEBI:15636"/>
        <dbReference type="ChEBI" id="CHEBI:33384"/>
        <dbReference type="ChEBI" id="CHEBI:57305"/>
        <dbReference type="ChEBI" id="CHEBI:57453"/>
        <dbReference type="EC" id="2.1.2.1"/>
    </reaction>
</comment>
<comment type="cofactor">
    <cofactor evidence="1">
        <name>pyridoxal 5'-phosphate</name>
        <dbReference type="ChEBI" id="CHEBI:597326"/>
    </cofactor>
</comment>
<comment type="pathway">
    <text evidence="1">One-carbon metabolism; tetrahydrofolate interconversion.</text>
</comment>
<comment type="pathway">
    <text evidence="1">Amino-acid biosynthesis; glycine biosynthesis; glycine from L-serine: step 1/1.</text>
</comment>
<comment type="subunit">
    <text evidence="1">Homodimer.</text>
</comment>
<comment type="subcellular location">
    <subcellularLocation>
        <location evidence="1">Cytoplasm</location>
    </subcellularLocation>
</comment>
<comment type="similarity">
    <text evidence="1">Belongs to the SHMT family.</text>
</comment>